<feature type="chain" id="PRO_1000114304" description="Probable septum site-determining protein MinC">
    <location>
        <begin position="1"/>
        <end position="228"/>
    </location>
</feature>
<keyword id="KW-0131">Cell cycle</keyword>
<keyword id="KW-0132">Cell division</keyword>
<keyword id="KW-0717">Septation</keyword>
<sequence length="228" mass="24546">MSQSPIELKGSSFTLSVVHLHDSRPEVIRQALQEKVDQAPAFLKNAPVVINVATLPNGANWKDLQQAVTSAGLRIVGISGCQDERQKRAIARAGLPLLSEGKGQKLAPEPVISPPENVPTQTRIINTPVRSGQQIYARNCDLIVISSVSAGAELIADGNIHIYGMMRGRALAGASGDAKCQIFCTHLGAELVSIAGQYWLSDQIPLEYFGQAARLYLQDNTLTIQPLN</sequence>
<protein>
    <recommendedName>
        <fullName evidence="1">Probable septum site-determining protein MinC</fullName>
    </recommendedName>
</protein>
<comment type="function">
    <text evidence="1">Cell division inhibitor that blocks the formation of polar Z ring septums. Rapidly oscillates between the poles of the cell to destabilize FtsZ filaments that have formed before they mature into polar Z rings. Prevents FtsZ polymerization.</text>
</comment>
<comment type="subunit">
    <text evidence="1">Interacts with MinD and FtsZ.</text>
</comment>
<comment type="similarity">
    <text evidence="1">Belongs to the MinC family.</text>
</comment>
<name>MINC_YERPG</name>
<gene>
    <name evidence="1" type="primary">minC</name>
    <name type="ordered locus">YpAngola_A2399</name>
</gene>
<organism>
    <name type="scientific">Yersinia pestis bv. Antiqua (strain Angola)</name>
    <dbReference type="NCBI Taxonomy" id="349746"/>
    <lineage>
        <taxon>Bacteria</taxon>
        <taxon>Pseudomonadati</taxon>
        <taxon>Pseudomonadota</taxon>
        <taxon>Gammaproteobacteria</taxon>
        <taxon>Enterobacterales</taxon>
        <taxon>Yersiniaceae</taxon>
        <taxon>Yersinia</taxon>
    </lineage>
</organism>
<accession>A9QYV2</accession>
<dbReference type="EMBL" id="CP000901">
    <property type="protein sequence ID" value="ABX86830.1"/>
    <property type="molecule type" value="Genomic_DNA"/>
</dbReference>
<dbReference type="RefSeq" id="WP_002220631.1">
    <property type="nucleotide sequence ID" value="NZ_CP009935.1"/>
</dbReference>
<dbReference type="SMR" id="A9QYV2"/>
<dbReference type="GeneID" id="96665552"/>
<dbReference type="KEGG" id="ypg:YpAngola_A2399"/>
<dbReference type="PATRIC" id="fig|349746.12.peg.3415"/>
<dbReference type="GO" id="GO:0000902">
    <property type="term" value="P:cell morphogenesis"/>
    <property type="evidence" value="ECO:0007669"/>
    <property type="project" value="InterPro"/>
</dbReference>
<dbReference type="GO" id="GO:0000917">
    <property type="term" value="P:division septum assembly"/>
    <property type="evidence" value="ECO:0007669"/>
    <property type="project" value="UniProtKB-KW"/>
</dbReference>
<dbReference type="GO" id="GO:0051302">
    <property type="term" value="P:regulation of cell division"/>
    <property type="evidence" value="ECO:0007669"/>
    <property type="project" value="InterPro"/>
</dbReference>
<dbReference type="GO" id="GO:1901891">
    <property type="term" value="P:regulation of cell septum assembly"/>
    <property type="evidence" value="ECO:0007669"/>
    <property type="project" value="InterPro"/>
</dbReference>
<dbReference type="FunFam" id="2.160.20.70:FF:000002">
    <property type="entry name" value="Probable septum site-determining protein MinC"/>
    <property type="match status" value="1"/>
</dbReference>
<dbReference type="Gene3D" id="2.160.20.70">
    <property type="match status" value="1"/>
</dbReference>
<dbReference type="Gene3D" id="3.30.70.260">
    <property type="match status" value="1"/>
</dbReference>
<dbReference type="HAMAP" id="MF_00267">
    <property type="entry name" value="MinC"/>
    <property type="match status" value="1"/>
</dbReference>
<dbReference type="InterPro" id="IPR016098">
    <property type="entry name" value="CAP/MinC_C"/>
</dbReference>
<dbReference type="InterPro" id="IPR013033">
    <property type="entry name" value="MinC"/>
</dbReference>
<dbReference type="InterPro" id="IPR036145">
    <property type="entry name" value="MinC_C_sf"/>
</dbReference>
<dbReference type="InterPro" id="IPR007874">
    <property type="entry name" value="MinC_N"/>
</dbReference>
<dbReference type="InterPro" id="IPR005526">
    <property type="entry name" value="Septum_form_inhib_MinC_C"/>
</dbReference>
<dbReference type="NCBIfam" id="TIGR01222">
    <property type="entry name" value="minC"/>
    <property type="match status" value="1"/>
</dbReference>
<dbReference type="PANTHER" id="PTHR34108">
    <property type="entry name" value="SEPTUM SITE-DETERMINING PROTEIN MINC"/>
    <property type="match status" value="1"/>
</dbReference>
<dbReference type="PANTHER" id="PTHR34108:SF1">
    <property type="entry name" value="SEPTUM SITE-DETERMINING PROTEIN MINC"/>
    <property type="match status" value="1"/>
</dbReference>
<dbReference type="Pfam" id="PF03775">
    <property type="entry name" value="MinC_C"/>
    <property type="match status" value="1"/>
</dbReference>
<dbReference type="Pfam" id="PF05209">
    <property type="entry name" value="MinC_N"/>
    <property type="match status" value="1"/>
</dbReference>
<dbReference type="SUPFAM" id="SSF63848">
    <property type="entry name" value="Cell-division inhibitor MinC, C-terminal domain"/>
    <property type="match status" value="1"/>
</dbReference>
<proteinExistence type="inferred from homology"/>
<reference key="1">
    <citation type="journal article" date="2010" name="J. Bacteriol.">
        <title>Genome sequence of the deep-rooted Yersinia pestis strain Angola reveals new insights into the evolution and pangenome of the plague bacterium.</title>
        <authorList>
            <person name="Eppinger M."/>
            <person name="Worsham P.L."/>
            <person name="Nikolich M.P."/>
            <person name="Riley D.R."/>
            <person name="Sebastian Y."/>
            <person name="Mou S."/>
            <person name="Achtman M."/>
            <person name="Lindler L.E."/>
            <person name="Ravel J."/>
        </authorList>
    </citation>
    <scope>NUCLEOTIDE SEQUENCE [LARGE SCALE GENOMIC DNA]</scope>
    <source>
        <strain>Angola</strain>
    </source>
</reference>
<evidence type="ECO:0000255" key="1">
    <source>
        <dbReference type="HAMAP-Rule" id="MF_00267"/>
    </source>
</evidence>